<feature type="chain" id="PRO_0000319998" description="Syntaxin-8A">
    <location>
        <begin position="1"/>
        <end position="152"/>
    </location>
</feature>
<feature type="topological domain" description="Cytoplasmic" evidence="1 2">
    <location>
        <begin position="1"/>
        <end position="131"/>
    </location>
</feature>
<feature type="transmembrane region" description="Helical; Anchor for type IV membrane protein">
    <location>
        <begin position="132"/>
        <end position="152"/>
    </location>
</feature>
<feature type="domain" description="t-SNARE coiled-coil homology" evidence="3">
    <location>
        <begin position="60"/>
        <end position="122"/>
    </location>
</feature>
<feature type="region of interest" description="Disordered" evidence="4">
    <location>
        <begin position="1"/>
        <end position="22"/>
    </location>
</feature>
<feature type="compositionally biased region" description="Low complexity" evidence="4">
    <location>
        <begin position="1"/>
        <end position="14"/>
    </location>
</feature>
<name>STX8A_DICDI</name>
<dbReference type="EMBL" id="AAFI02000013">
    <property type="protein sequence ID" value="EAL69780.1"/>
    <property type="molecule type" value="Genomic_DNA"/>
</dbReference>
<dbReference type="RefSeq" id="XP_643701.1">
    <property type="nucleotide sequence ID" value="XM_638609.1"/>
</dbReference>
<dbReference type="SMR" id="Q553P5"/>
<dbReference type="FunCoup" id="Q553P5">
    <property type="interactions" value="15"/>
</dbReference>
<dbReference type="IntAct" id="Q553P5">
    <property type="interactions" value="1"/>
</dbReference>
<dbReference type="STRING" id="44689.Q553P5"/>
<dbReference type="PaxDb" id="44689-DDB0231533"/>
<dbReference type="EnsemblProtists" id="EAL69780">
    <property type="protein sequence ID" value="EAL69780"/>
    <property type="gene ID" value="DDB_G0275429"/>
</dbReference>
<dbReference type="GeneID" id="8619970"/>
<dbReference type="KEGG" id="ddi:DDB_G0275429"/>
<dbReference type="dictyBase" id="DDB_G0275429">
    <property type="gene designation" value="syn8A"/>
</dbReference>
<dbReference type="VEuPathDB" id="AmoebaDB:DDB_G0275429"/>
<dbReference type="eggNOG" id="KOG3202">
    <property type="taxonomic scope" value="Eukaryota"/>
</dbReference>
<dbReference type="HOGENOM" id="CLU_1725718_0_0_1"/>
<dbReference type="InParanoid" id="Q553P5"/>
<dbReference type="OMA" id="KSDTCCY"/>
<dbReference type="PhylomeDB" id="Q553P5"/>
<dbReference type="PRO" id="PR:Q553P5"/>
<dbReference type="Proteomes" id="UP000002195">
    <property type="component" value="Chromosome 2"/>
</dbReference>
<dbReference type="GO" id="GO:0005768">
    <property type="term" value="C:endosome"/>
    <property type="evidence" value="ECO:0000314"/>
    <property type="project" value="dictyBase"/>
</dbReference>
<dbReference type="GO" id="GO:0010008">
    <property type="term" value="C:endosome membrane"/>
    <property type="evidence" value="ECO:0000314"/>
    <property type="project" value="UniProtKB"/>
</dbReference>
<dbReference type="GO" id="GO:0031201">
    <property type="term" value="C:SNARE complex"/>
    <property type="evidence" value="ECO:0000314"/>
    <property type="project" value="dictyBase"/>
</dbReference>
<dbReference type="GO" id="GO:0008333">
    <property type="term" value="P:endosome to lysosome transport"/>
    <property type="evidence" value="ECO:0000314"/>
    <property type="project" value="UniProtKB"/>
</dbReference>
<dbReference type="GO" id="GO:0006906">
    <property type="term" value="P:vesicle fusion"/>
    <property type="evidence" value="ECO:0000314"/>
    <property type="project" value="UniProtKB"/>
</dbReference>
<dbReference type="CDD" id="cd15841">
    <property type="entry name" value="SNARE_Qc"/>
    <property type="match status" value="1"/>
</dbReference>
<dbReference type="FunFam" id="1.20.5.110:FF:000173">
    <property type="entry name" value="Putative syntaxin"/>
    <property type="match status" value="1"/>
</dbReference>
<dbReference type="Gene3D" id="1.20.5.110">
    <property type="match status" value="1"/>
</dbReference>
<dbReference type="InterPro" id="IPR000727">
    <property type="entry name" value="T_SNARE_dom"/>
</dbReference>
<dbReference type="PANTHER" id="PTHR12791">
    <property type="entry name" value="GOLGI SNARE BET1-RELATED"/>
    <property type="match status" value="1"/>
</dbReference>
<dbReference type="Pfam" id="PF05739">
    <property type="entry name" value="SNARE"/>
    <property type="match status" value="1"/>
</dbReference>
<dbReference type="SMART" id="SM00397">
    <property type="entry name" value="t_SNARE"/>
    <property type="match status" value="1"/>
</dbReference>
<dbReference type="SUPFAM" id="SSF58038">
    <property type="entry name" value="SNARE fusion complex"/>
    <property type="match status" value="1"/>
</dbReference>
<dbReference type="PROSITE" id="PS50192">
    <property type="entry name" value="T_SNARE"/>
    <property type="match status" value="1"/>
</dbReference>
<sequence>MNNNNNFNSNFNSNRISSTQPYLSDDARNALFEGKDRKWGNNNNNNYDTLSNQDVFEKQKRDMEEQDKMLDALSGSISRVKDTAITINKTAQEQTDMLDELDVHVDSTSARMRNTTKNLITLTQQSKTTGYCSAICFLLLVLLVIIILASVL</sequence>
<protein>
    <recommendedName>
        <fullName>Syntaxin-8A</fullName>
    </recommendedName>
</protein>
<proteinExistence type="evidence at protein level"/>
<reference key="1">
    <citation type="journal article" date="2002" name="Nature">
        <title>Sequence and analysis of chromosome 2 of Dictyostelium discoideum.</title>
        <authorList>
            <person name="Gloeckner G."/>
            <person name="Eichinger L."/>
            <person name="Szafranski K."/>
            <person name="Pachebat J.A."/>
            <person name="Bankier A.T."/>
            <person name="Dear P.H."/>
            <person name="Lehmann R."/>
            <person name="Baumgart C."/>
            <person name="Parra G."/>
            <person name="Abril J.F."/>
            <person name="Guigo R."/>
            <person name="Kumpf K."/>
            <person name="Tunggal B."/>
            <person name="Cox E.C."/>
            <person name="Quail M.A."/>
            <person name="Platzer M."/>
            <person name="Rosenthal A."/>
            <person name="Noegel A.A."/>
        </authorList>
    </citation>
    <scope>NUCLEOTIDE SEQUENCE [LARGE SCALE GENOMIC DNA]</scope>
    <source>
        <strain>AX4</strain>
    </source>
</reference>
<reference evidence="8" key="2">
    <citation type="journal article" date="2005" name="Nature">
        <title>The genome of the social amoeba Dictyostelium discoideum.</title>
        <authorList>
            <person name="Eichinger L."/>
            <person name="Pachebat J.A."/>
            <person name="Gloeckner G."/>
            <person name="Rajandream M.A."/>
            <person name="Sucgang R."/>
            <person name="Berriman M."/>
            <person name="Song J."/>
            <person name="Olsen R."/>
            <person name="Szafranski K."/>
            <person name="Xu Q."/>
            <person name="Tunggal B."/>
            <person name="Kummerfeld S."/>
            <person name="Madera M."/>
            <person name="Konfortov B.A."/>
            <person name="Rivero F."/>
            <person name="Bankier A.T."/>
            <person name="Lehmann R."/>
            <person name="Hamlin N."/>
            <person name="Davies R."/>
            <person name="Gaudet P."/>
            <person name="Fey P."/>
            <person name="Pilcher K."/>
            <person name="Chen G."/>
            <person name="Saunders D."/>
            <person name="Sodergren E.J."/>
            <person name="Davis P."/>
            <person name="Kerhornou A."/>
            <person name="Nie X."/>
            <person name="Hall N."/>
            <person name="Anjard C."/>
            <person name="Hemphill L."/>
            <person name="Bason N."/>
            <person name="Farbrother P."/>
            <person name="Desany B."/>
            <person name="Just E."/>
            <person name="Morio T."/>
            <person name="Rost R."/>
            <person name="Churcher C.M."/>
            <person name="Cooper J."/>
            <person name="Haydock S."/>
            <person name="van Driessche N."/>
            <person name="Cronin A."/>
            <person name="Goodhead I."/>
            <person name="Muzny D.M."/>
            <person name="Mourier T."/>
            <person name="Pain A."/>
            <person name="Lu M."/>
            <person name="Harper D."/>
            <person name="Lindsay R."/>
            <person name="Hauser H."/>
            <person name="James K.D."/>
            <person name="Quiles M."/>
            <person name="Madan Babu M."/>
            <person name="Saito T."/>
            <person name="Buchrieser C."/>
            <person name="Wardroper A."/>
            <person name="Felder M."/>
            <person name="Thangavelu M."/>
            <person name="Johnson D."/>
            <person name="Knights A."/>
            <person name="Loulseged H."/>
            <person name="Mungall K.L."/>
            <person name="Oliver K."/>
            <person name="Price C."/>
            <person name="Quail M.A."/>
            <person name="Urushihara H."/>
            <person name="Hernandez J."/>
            <person name="Rabbinowitsch E."/>
            <person name="Steffen D."/>
            <person name="Sanders M."/>
            <person name="Ma J."/>
            <person name="Kohara Y."/>
            <person name="Sharp S."/>
            <person name="Simmonds M.N."/>
            <person name="Spiegler S."/>
            <person name="Tivey A."/>
            <person name="Sugano S."/>
            <person name="White B."/>
            <person name="Walker D."/>
            <person name="Woodward J.R."/>
            <person name="Winckler T."/>
            <person name="Tanaka Y."/>
            <person name="Shaulsky G."/>
            <person name="Schleicher M."/>
            <person name="Weinstock G.M."/>
            <person name="Rosenthal A."/>
            <person name="Cox E.C."/>
            <person name="Chisholm R.L."/>
            <person name="Gibbs R.A."/>
            <person name="Loomis W.F."/>
            <person name="Platzer M."/>
            <person name="Kay R.R."/>
            <person name="Williams J.G."/>
            <person name="Dear P.H."/>
            <person name="Noegel A.A."/>
            <person name="Barrell B.G."/>
            <person name="Kuspa A."/>
        </authorList>
    </citation>
    <scope>NUCLEOTIDE SEQUENCE [LARGE SCALE GENOMIC DNA]</scope>
    <source>
        <strain>AX4</strain>
    </source>
</reference>
<reference evidence="6" key="3">
    <citation type="journal article" date="2002" name="Biochem. J.">
        <title>Syntaxin 7, syntaxin 8, Vti1 and VAMP7 (vesicle-associated membrane protein 7) form an active SNARE complex for early macropinocytic compartment fusion in Dictyostelium discoideum.</title>
        <authorList>
            <person name="Bogdanovic A."/>
            <person name="Bennett N."/>
            <person name="Kieffer S."/>
            <person name="Louwagie M."/>
            <person name="Morio T."/>
            <person name="Garin J."/>
            <person name="Satre M."/>
            <person name="Bruckert F."/>
        </authorList>
    </citation>
    <scope>PROTEIN SEQUENCE OF 16-28</scope>
    <scope>FUNCTION</scope>
    <scope>IDENTIFICATION IN SNARE COMPLEX</scope>
    <scope>SUBCELLULAR LOCATION</scope>
</reference>
<keyword id="KW-0175">Coiled coil</keyword>
<keyword id="KW-0903">Direct protein sequencing</keyword>
<keyword id="KW-0967">Endosome</keyword>
<keyword id="KW-0472">Membrane</keyword>
<keyword id="KW-1185">Reference proteome</keyword>
<keyword id="KW-0735">Signal-anchor</keyword>
<keyword id="KW-0812">Transmembrane</keyword>
<keyword id="KW-1133">Transmembrane helix</keyword>
<keyword id="KW-0813">Transport</keyword>
<comment type="function">
    <text evidence="5">Involved in the targeting and/or fusion of transport vesicles to their target membrane during transport of proteins from the early endosome to the lysosome. Required for fusion of late endosomes with lysosomes and homotypic lysosomal fusion.</text>
</comment>
<comment type="subunit">
    <text evidence="5">Component of the SNARE complex composed of syn7A, syn8A, vamp7A and vti1A.</text>
</comment>
<comment type="subcellular location">
    <subcellularLocation>
        <location evidence="5">Endosome membrane</location>
        <topology evidence="2 5">Single-pass membrane protein</topology>
    </subcellularLocation>
</comment>
<comment type="similarity">
    <text evidence="2">Belongs to the syntaxin family.</text>
</comment>
<gene>
    <name evidence="8" type="primary">syn8A</name>
    <name evidence="7" type="synonym">syn8</name>
    <name type="ORF">DDB_G0275429</name>
</gene>
<evidence type="ECO:0000250" key="1">
    <source>
        <dbReference type="UniProtKB" id="Q9UNK0"/>
    </source>
</evidence>
<evidence type="ECO:0000255" key="2"/>
<evidence type="ECO:0000255" key="3">
    <source>
        <dbReference type="PROSITE-ProRule" id="PRU00202"/>
    </source>
</evidence>
<evidence type="ECO:0000256" key="4">
    <source>
        <dbReference type="SAM" id="MobiDB-lite"/>
    </source>
</evidence>
<evidence type="ECO:0000269" key="5">
    <source>
    </source>
</evidence>
<evidence type="ECO:0000305" key="6"/>
<evidence type="ECO:0000312" key="7">
    <source>
        <dbReference type="dictyBase" id="DDB_G0275429"/>
    </source>
</evidence>
<evidence type="ECO:0000312" key="8">
    <source>
        <dbReference type="EMBL" id="EAL69780.1"/>
    </source>
</evidence>
<organism>
    <name type="scientific">Dictyostelium discoideum</name>
    <name type="common">Social amoeba</name>
    <dbReference type="NCBI Taxonomy" id="44689"/>
    <lineage>
        <taxon>Eukaryota</taxon>
        <taxon>Amoebozoa</taxon>
        <taxon>Evosea</taxon>
        <taxon>Eumycetozoa</taxon>
        <taxon>Dictyostelia</taxon>
        <taxon>Dictyosteliales</taxon>
        <taxon>Dictyosteliaceae</taxon>
        <taxon>Dictyostelium</taxon>
    </lineage>
</organism>
<accession>Q553P5</accession>